<gene>
    <name evidence="1" type="primary">hisZ</name>
    <name type="ordered locus">Bcen_6277</name>
</gene>
<feature type="chain" id="PRO_1000016247" description="ATP phosphoribosyltransferase regulatory subunit">
    <location>
        <begin position="1"/>
        <end position="382"/>
    </location>
</feature>
<name>HISZ_BURO1</name>
<proteinExistence type="inferred from homology"/>
<evidence type="ECO:0000255" key="1">
    <source>
        <dbReference type="HAMAP-Rule" id="MF_00125"/>
    </source>
</evidence>
<accession>Q1BGW5</accession>
<dbReference type="EMBL" id="CP000380">
    <property type="protein sequence ID" value="ABF81140.1"/>
    <property type="molecule type" value="Genomic_DNA"/>
</dbReference>
<dbReference type="SMR" id="Q1BGW5"/>
<dbReference type="HOGENOM" id="CLU_025113_0_1_4"/>
<dbReference type="UniPathway" id="UPA00031">
    <property type="reaction ID" value="UER00006"/>
</dbReference>
<dbReference type="GO" id="GO:0005737">
    <property type="term" value="C:cytoplasm"/>
    <property type="evidence" value="ECO:0007669"/>
    <property type="project" value="UniProtKB-SubCell"/>
</dbReference>
<dbReference type="GO" id="GO:0004821">
    <property type="term" value="F:histidine-tRNA ligase activity"/>
    <property type="evidence" value="ECO:0007669"/>
    <property type="project" value="TreeGrafter"/>
</dbReference>
<dbReference type="GO" id="GO:0006427">
    <property type="term" value="P:histidyl-tRNA aminoacylation"/>
    <property type="evidence" value="ECO:0007669"/>
    <property type="project" value="TreeGrafter"/>
</dbReference>
<dbReference type="GO" id="GO:0000105">
    <property type="term" value="P:L-histidine biosynthetic process"/>
    <property type="evidence" value="ECO:0007669"/>
    <property type="project" value="UniProtKB-UniRule"/>
</dbReference>
<dbReference type="CDD" id="cd00773">
    <property type="entry name" value="HisRS-like_core"/>
    <property type="match status" value="1"/>
</dbReference>
<dbReference type="Gene3D" id="3.30.930.10">
    <property type="entry name" value="Bira Bifunctional Protein, Domain 2"/>
    <property type="match status" value="1"/>
</dbReference>
<dbReference type="HAMAP" id="MF_00125">
    <property type="entry name" value="HisZ"/>
    <property type="match status" value="1"/>
</dbReference>
<dbReference type="InterPro" id="IPR045864">
    <property type="entry name" value="aa-tRNA-synth_II/BPL/LPL"/>
</dbReference>
<dbReference type="InterPro" id="IPR041715">
    <property type="entry name" value="HisRS-like_core"/>
</dbReference>
<dbReference type="InterPro" id="IPR004516">
    <property type="entry name" value="HisRS/HisZ"/>
</dbReference>
<dbReference type="InterPro" id="IPR004517">
    <property type="entry name" value="HisZ"/>
</dbReference>
<dbReference type="NCBIfam" id="TIGR00443">
    <property type="entry name" value="hisZ_biosyn_reg"/>
    <property type="match status" value="1"/>
</dbReference>
<dbReference type="NCBIfam" id="NF008935">
    <property type="entry name" value="PRK12292.1-1"/>
    <property type="match status" value="1"/>
</dbReference>
<dbReference type="NCBIfam" id="NF009086">
    <property type="entry name" value="PRK12421.1"/>
    <property type="match status" value="1"/>
</dbReference>
<dbReference type="PANTHER" id="PTHR43707:SF1">
    <property type="entry name" value="HISTIDINE--TRNA LIGASE, MITOCHONDRIAL-RELATED"/>
    <property type="match status" value="1"/>
</dbReference>
<dbReference type="PANTHER" id="PTHR43707">
    <property type="entry name" value="HISTIDYL-TRNA SYNTHETASE"/>
    <property type="match status" value="1"/>
</dbReference>
<dbReference type="Pfam" id="PF13393">
    <property type="entry name" value="tRNA-synt_His"/>
    <property type="match status" value="1"/>
</dbReference>
<dbReference type="PIRSF" id="PIRSF001549">
    <property type="entry name" value="His-tRNA_synth"/>
    <property type="match status" value="1"/>
</dbReference>
<dbReference type="SUPFAM" id="SSF55681">
    <property type="entry name" value="Class II aaRS and biotin synthetases"/>
    <property type="match status" value="1"/>
</dbReference>
<comment type="function">
    <text evidence="1">Required for the first step of histidine biosynthesis. May allow the feedback regulation of ATP phosphoribosyltransferase activity by histidine.</text>
</comment>
<comment type="pathway">
    <text evidence="1">Amino-acid biosynthesis; L-histidine biosynthesis; L-histidine from 5-phospho-alpha-D-ribose 1-diphosphate: step 1/9.</text>
</comment>
<comment type="subunit">
    <text evidence="1">Heteromultimer composed of HisG and HisZ subunits.</text>
</comment>
<comment type="subcellular location">
    <subcellularLocation>
        <location evidence="1">Cytoplasm</location>
    </subcellularLocation>
</comment>
<comment type="miscellaneous">
    <text>This function is generally fulfilled by the C-terminal part of HisG, which is missing in some bacteria such as this one.</text>
</comment>
<comment type="similarity">
    <text evidence="1">Belongs to the class-II aminoacyl-tRNA synthetase family. HisZ subfamily.</text>
</comment>
<reference key="1">
    <citation type="submission" date="2006-05" db="EMBL/GenBank/DDBJ databases">
        <title>Complete sequence of chromosome 3 of Burkholderia cenocepacia AU 1054.</title>
        <authorList>
            <consortium name="US DOE Joint Genome Institute"/>
            <person name="Copeland A."/>
            <person name="Lucas S."/>
            <person name="Lapidus A."/>
            <person name="Barry K."/>
            <person name="Detter J.C."/>
            <person name="Glavina del Rio T."/>
            <person name="Hammon N."/>
            <person name="Israni S."/>
            <person name="Dalin E."/>
            <person name="Tice H."/>
            <person name="Pitluck S."/>
            <person name="Chain P."/>
            <person name="Malfatti S."/>
            <person name="Shin M."/>
            <person name="Vergez L."/>
            <person name="Schmutz J."/>
            <person name="Larimer F."/>
            <person name="Land M."/>
            <person name="Hauser L."/>
            <person name="Kyrpides N."/>
            <person name="Lykidis A."/>
            <person name="LiPuma J.J."/>
            <person name="Konstantinidis K."/>
            <person name="Tiedje J.M."/>
            <person name="Richardson P."/>
        </authorList>
    </citation>
    <scope>NUCLEOTIDE SEQUENCE [LARGE SCALE GENOMIC DNA]</scope>
    <source>
        <strain>AU 1054</strain>
    </source>
</reference>
<sequence length="382" mass="41574">MSTWLLPENIADVLPSEARKIEELRRRLLDRFRSYGYEMVMPPLLEYLESLLTSGGADLRLRTFKLVDQLSGRTLGLRADITPQVARIDAHLLNRQGVTRLCYAGHVMHTRPRGLHATREQIQIGAEIYGHAGLEADLEIQQLMLDALHLAGLSRIRLDLGHAGVLAALLARDAQAAERGESLYDALSGKDVPLLNELTDDLGADTRAALRALPNLYGDASVLAEARTRLPVLPEITRALDDLAQLASQAKGVEVAIDLADLRGYAYHSGAMFSAYIDGVPNAIARGGRYDHVGQAYGRSRPATGFSLDLRELARISPVEARGTAILAPWAQDDALGAAVAALRDAGEVVIQALPGHDHVLDEFACDRSLVERNGAWVVEPR</sequence>
<keyword id="KW-0028">Amino-acid biosynthesis</keyword>
<keyword id="KW-0963">Cytoplasm</keyword>
<keyword id="KW-0368">Histidine biosynthesis</keyword>
<protein>
    <recommendedName>
        <fullName evidence="1">ATP phosphoribosyltransferase regulatory subunit</fullName>
    </recommendedName>
</protein>
<organism>
    <name type="scientific">Burkholderia orbicola (strain AU 1054)</name>
    <dbReference type="NCBI Taxonomy" id="331271"/>
    <lineage>
        <taxon>Bacteria</taxon>
        <taxon>Pseudomonadati</taxon>
        <taxon>Pseudomonadota</taxon>
        <taxon>Betaproteobacteria</taxon>
        <taxon>Burkholderiales</taxon>
        <taxon>Burkholderiaceae</taxon>
        <taxon>Burkholderia</taxon>
        <taxon>Burkholderia cepacia complex</taxon>
        <taxon>Burkholderia orbicola</taxon>
    </lineage>
</organism>